<reference key="1">
    <citation type="submission" date="1996-05" db="EMBL/GenBank/DDBJ databases">
        <title>Sunflower cytochrome c mRNA levels are subject to tissue-specific regulation.</title>
        <authorList>
            <person name="Felitti S.A."/>
            <person name="Chan R.L."/>
            <person name="Gago G."/>
            <person name="Valle E.M."/>
            <person name="Gonzalez D.H."/>
        </authorList>
    </citation>
    <scope>NUCLEOTIDE SEQUENCE [MRNA]</scope>
    <source>
        <tissue>Root</tissue>
    </source>
</reference>
<reference key="2">
    <citation type="journal article" date="1970" name="Biochem. J.">
        <title>The amino acid sequence of Helianthus annuus L. (sunflower) cytochrome c deduced from chymotryptic peptides.</title>
        <authorList>
            <person name="Ramshaw J.A.M."/>
            <person name="Thompson E.W."/>
            <person name="Boulter D."/>
        </authorList>
    </citation>
    <scope>PROTEIN SEQUENCE OF 2-112</scope>
    <scope>ACETYLATION AT ALA-2</scope>
    <scope>METHYLATION AT LYS-81 AND LYS-95</scope>
</reference>
<proteinExistence type="evidence at protein level"/>
<comment type="function">
    <text>Electron carrier protein. The oxidized form of the cytochrome c heme group can accept an electron from the heme group of the cytochrome c1 subunit of cytochrome reductase. Cytochrome c then transfers this electron to the cytochrome oxidase complex, the final protein carrier in the mitochondrial electron-transport chain.</text>
</comment>
<comment type="subcellular location">
    <subcellularLocation>
        <location>Mitochondrion intermembrane space</location>
    </subcellularLocation>
    <text>Loosely associated with the inner membrane.</text>
</comment>
<comment type="PTM">
    <text>Binds 1 heme c group covalently per subunit.</text>
</comment>
<comment type="similarity">
    <text evidence="3">Belongs to the cytochrome c family.</text>
</comment>
<comment type="online information" name="Protein Spotlight">
    <link uri="https://www.proteinspotlight.org/back_issues/076"/>
    <text>Life shuttle - Issue 76 of November 2006</text>
</comment>
<gene>
    <name type="primary">CYTC1</name>
</gene>
<feature type="initiator methionine" description="Removed" evidence="2">
    <location>
        <position position="1"/>
    </location>
</feature>
<feature type="chain" id="PRO_0000108299" description="Cytochrome c">
    <location>
        <begin position="2"/>
        <end position="112"/>
    </location>
</feature>
<feature type="binding site" description="covalent" evidence="1 2">
    <location>
        <position position="23"/>
    </location>
    <ligand>
        <name>heme c</name>
        <dbReference type="ChEBI" id="CHEBI:61717"/>
    </ligand>
</feature>
<feature type="binding site" description="covalent" evidence="1 2">
    <location>
        <position position="26"/>
    </location>
    <ligand>
        <name>heme c</name>
        <dbReference type="ChEBI" id="CHEBI:61717"/>
    </ligand>
</feature>
<feature type="binding site" description="axial binding residue">
    <location>
        <position position="27"/>
    </location>
    <ligand>
        <name>heme c</name>
        <dbReference type="ChEBI" id="CHEBI:61717"/>
    </ligand>
    <ligandPart>
        <name>Fe</name>
        <dbReference type="ChEBI" id="CHEBI:18248"/>
    </ligandPart>
</feature>
<feature type="binding site" description="axial binding residue">
    <location>
        <position position="89"/>
    </location>
    <ligand>
        <name>heme c</name>
        <dbReference type="ChEBI" id="CHEBI:61717"/>
    </ligand>
    <ligandPart>
        <name>Fe</name>
        <dbReference type="ChEBI" id="CHEBI:18248"/>
    </ligandPart>
</feature>
<feature type="modified residue" description="N-acetylalanine" evidence="2">
    <location>
        <position position="2"/>
    </location>
</feature>
<feature type="modified residue" description="N6,N6,N6-trimethyllysine" evidence="2">
    <location>
        <position position="81"/>
    </location>
</feature>
<feature type="modified residue" description="N6,N6,N6-trimethyllysine" evidence="2">
    <location>
        <position position="95"/>
    </location>
</feature>
<feature type="sequence conflict" description="In Ref. 2; AA sequence." evidence="3" ref="2">
    <original>N</original>
    <variation>D</variation>
    <location>
        <position position="11"/>
    </location>
</feature>
<feature type="sequence conflict" description="In Ref. 2; AA sequence." evidence="3" ref="2">
    <original>E</original>
    <variation>A</variation>
    <location>
        <position position="16"/>
    </location>
</feature>
<feature type="sequence conflict" description="In Ref. 2; AA sequence." evidence="3" ref="2">
    <original>G</original>
    <variation>A</variation>
    <location>
        <position position="60"/>
    </location>
</feature>
<feature type="sequence conflict" description="In Ref. 2; AA sequence." evidence="3" ref="2">
    <original>K</original>
    <variation>M</variation>
    <location>
        <position position="64"/>
    </location>
</feature>
<sequence length="112" mass="12129">MASFAEAPAGNPTTGEKIFKTKCAQCHTVEKGAGHKQGPNLNGLFGRQSGTTAGYSYSAGNKNKAVIWEENTLYDYLLNPKKYIPGTKMVFPGLKKPQERADLIAYLKTSTA</sequence>
<dbReference type="EMBL" id="L77113">
    <property type="protein sequence ID" value="AAA92712.1"/>
    <property type="molecule type" value="mRNA"/>
</dbReference>
<dbReference type="PIR" id="A00062">
    <property type="entry name" value="CCFS"/>
</dbReference>
<dbReference type="SMR" id="P00070"/>
<dbReference type="iPTMnet" id="P00070"/>
<dbReference type="EnsemblPlants" id="mRNA:HanXRQr2_Chr11g0472061">
    <property type="protein sequence ID" value="mRNA:HanXRQr2_Chr11g0472061"/>
    <property type="gene ID" value="HanXRQr2_Chr11g0472061"/>
</dbReference>
<dbReference type="Gramene" id="mRNA:HanXRQr2_Chr11g0472061">
    <property type="protein sequence ID" value="mRNA:HanXRQr2_Chr11g0472061"/>
    <property type="gene ID" value="HanXRQr2_Chr11g0472061"/>
</dbReference>
<dbReference type="OMA" id="ARCKACH"/>
<dbReference type="OrthoDB" id="449280at2759"/>
<dbReference type="PhylomeDB" id="P00070"/>
<dbReference type="GO" id="GO:0005758">
    <property type="term" value="C:mitochondrial intermembrane space"/>
    <property type="evidence" value="ECO:0007669"/>
    <property type="project" value="UniProtKB-SubCell"/>
</dbReference>
<dbReference type="GO" id="GO:0009055">
    <property type="term" value="F:electron transfer activity"/>
    <property type="evidence" value="ECO:0007669"/>
    <property type="project" value="InterPro"/>
</dbReference>
<dbReference type="GO" id="GO:0020037">
    <property type="term" value="F:heme binding"/>
    <property type="evidence" value="ECO:0007669"/>
    <property type="project" value="InterPro"/>
</dbReference>
<dbReference type="GO" id="GO:0046872">
    <property type="term" value="F:metal ion binding"/>
    <property type="evidence" value="ECO:0007669"/>
    <property type="project" value="UniProtKB-KW"/>
</dbReference>
<dbReference type="GO" id="GO:0010336">
    <property type="term" value="P:gibberellic acid homeostasis"/>
    <property type="evidence" value="ECO:0007669"/>
    <property type="project" value="EnsemblPlants"/>
</dbReference>
<dbReference type="FunFam" id="1.10.760.10:FF:000001">
    <property type="entry name" value="Cytochrome c iso-1"/>
    <property type="match status" value="1"/>
</dbReference>
<dbReference type="Gene3D" id="1.10.760.10">
    <property type="entry name" value="Cytochrome c-like domain"/>
    <property type="match status" value="1"/>
</dbReference>
<dbReference type="InterPro" id="IPR009056">
    <property type="entry name" value="Cyt_c-like_dom"/>
</dbReference>
<dbReference type="InterPro" id="IPR036909">
    <property type="entry name" value="Cyt_c-like_dom_sf"/>
</dbReference>
<dbReference type="InterPro" id="IPR002327">
    <property type="entry name" value="Cyt_c_1A/1B"/>
</dbReference>
<dbReference type="PANTHER" id="PTHR11961">
    <property type="entry name" value="CYTOCHROME C"/>
    <property type="match status" value="1"/>
</dbReference>
<dbReference type="Pfam" id="PF00034">
    <property type="entry name" value="Cytochrom_C"/>
    <property type="match status" value="1"/>
</dbReference>
<dbReference type="PRINTS" id="PR00604">
    <property type="entry name" value="CYTCHRMECIAB"/>
</dbReference>
<dbReference type="SUPFAM" id="SSF46626">
    <property type="entry name" value="Cytochrome c"/>
    <property type="match status" value="1"/>
</dbReference>
<dbReference type="PROSITE" id="PS51007">
    <property type="entry name" value="CYTC"/>
    <property type="match status" value="1"/>
</dbReference>
<keyword id="KW-0007">Acetylation</keyword>
<keyword id="KW-0903">Direct protein sequencing</keyword>
<keyword id="KW-0249">Electron transport</keyword>
<keyword id="KW-0349">Heme</keyword>
<keyword id="KW-0408">Iron</keyword>
<keyword id="KW-0479">Metal-binding</keyword>
<keyword id="KW-0488">Methylation</keyword>
<keyword id="KW-0496">Mitochondrion</keyword>
<keyword id="KW-0679">Respiratory chain</keyword>
<keyword id="KW-0813">Transport</keyword>
<evidence type="ECO:0000255" key="1">
    <source>
        <dbReference type="PROSITE-ProRule" id="PRU00433"/>
    </source>
</evidence>
<evidence type="ECO:0000269" key="2">
    <source>
    </source>
</evidence>
<evidence type="ECO:0000305" key="3"/>
<organism>
    <name type="scientific">Helianthus annuus</name>
    <name type="common">Common sunflower</name>
    <dbReference type="NCBI Taxonomy" id="4232"/>
    <lineage>
        <taxon>Eukaryota</taxon>
        <taxon>Viridiplantae</taxon>
        <taxon>Streptophyta</taxon>
        <taxon>Embryophyta</taxon>
        <taxon>Tracheophyta</taxon>
        <taxon>Spermatophyta</taxon>
        <taxon>Magnoliopsida</taxon>
        <taxon>eudicotyledons</taxon>
        <taxon>Gunneridae</taxon>
        <taxon>Pentapetalae</taxon>
        <taxon>asterids</taxon>
        <taxon>campanulids</taxon>
        <taxon>Asterales</taxon>
        <taxon>Asteraceae</taxon>
        <taxon>Asteroideae</taxon>
        <taxon>Heliantheae alliance</taxon>
        <taxon>Heliantheae</taxon>
        <taxon>Helianthus</taxon>
    </lineage>
</organism>
<name>CYC_HELAN</name>
<protein>
    <recommendedName>
        <fullName>Cytochrome c</fullName>
    </recommendedName>
</protein>
<accession>P00070</accession>
<accession>Q39936</accession>